<comment type="function">
    <text evidence="1">Can catalyze the hydrolysis of ATP in the presence of single-stranded DNA, the ATP-dependent uptake of single-stranded DNA by duplex DNA, and the ATP-dependent hybridization of homologous single-stranded DNAs. It interacts with LexA causing its activation and leading to its autocatalytic cleavage.</text>
</comment>
<comment type="subcellular location">
    <subcellularLocation>
        <location evidence="1">Cytoplasm</location>
    </subcellularLocation>
</comment>
<comment type="similarity">
    <text evidence="1">Belongs to the RecA family.</text>
</comment>
<keyword id="KW-0067">ATP-binding</keyword>
<keyword id="KW-0963">Cytoplasm</keyword>
<keyword id="KW-0227">DNA damage</keyword>
<keyword id="KW-0233">DNA recombination</keyword>
<keyword id="KW-0234">DNA repair</keyword>
<keyword id="KW-0238">DNA-binding</keyword>
<keyword id="KW-0547">Nucleotide-binding</keyword>
<keyword id="KW-1185">Reference proteome</keyword>
<keyword id="KW-0742">SOS response</keyword>
<gene>
    <name evidence="1" type="primary">recA</name>
    <name type="ordered locus">VF_0535</name>
</gene>
<protein>
    <recommendedName>
        <fullName evidence="1">Protein RecA</fullName>
    </recommendedName>
    <alternativeName>
        <fullName evidence="1">Recombinase A</fullName>
    </alternativeName>
</protein>
<sequence length="348" mass="37587">MDDNKKKALAAALGQIEKQFGKGSIMKLGDNRTMDVETVSTGSLSLDIALGAGGLPMGRIVEIFGPESSGKTTLTLELIAAAQREGKTCAFIDAEHALDPVYAKKLGVNIDELLVSQPDTGEQALEICDALARSGAVDVMVIDSVAALTPKAEIEGEMGDSHMGLQARMLSQAMRKLTGNLKQSNCMAIFINQIRMKIGVMFGNPETTTGGNALKFYASVRLDIRRTGAVKDGDEVVGNETRIKVVKNKIAAPFKQAETQIMYGQGFNREGELIDLGVKHKLVDKAGAWYSYNGDKIGQGKANASKFMRENTEVAAELDKKLREMLLTPAEEKPETDAAPEIEENEEF</sequence>
<proteinExistence type="inferred from homology"/>
<dbReference type="EMBL" id="CP000020">
    <property type="protein sequence ID" value="AAW85030.1"/>
    <property type="molecule type" value="Genomic_DNA"/>
</dbReference>
<dbReference type="RefSeq" id="WP_005417772.1">
    <property type="nucleotide sequence ID" value="NZ_CAWLES010000001.1"/>
</dbReference>
<dbReference type="RefSeq" id="YP_203918.1">
    <property type="nucleotide sequence ID" value="NC_006840.2"/>
</dbReference>
<dbReference type="SMR" id="Q5E7G6"/>
<dbReference type="STRING" id="312309.VF_0535"/>
<dbReference type="EnsemblBacteria" id="AAW85030">
    <property type="protein sequence ID" value="AAW85030"/>
    <property type="gene ID" value="VF_0535"/>
</dbReference>
<dbReference type="GeneID" id="54163173"/>
<dbReference type="KEGG" id="vfi:VF_0535"/>
<dbReference type="PATRIC" id="fig|312309.11.peg.527"/>
<dbReference type="eggNOG" id="COG0468">
    <property type="taxonomic scope" value="Bacteria"/>
</dbReference>
<dbReference type="HOGENOM" id="CLU_040469_3_2_6"/>
<dbReference type="OrthoDB" id="9776733at2"/>
<dbReference type="Proteomes" id="UP000000537">
    <property type="component" value="Chromosome I"/>
</dbReference>
<dbReference type="GO" id="GO:0005829">
    <property type="term" value="C:cytosol"/>
    <property type="evidence" value="ECO:0007669"/>
    <property type="project" value="TreeGrafter"/>
</dbReference>
<dbReference type="GO" id="GO:0005524">
    <property type="term" value="F:ATP binding"/>
    <property type="evidence" value="ECO:0007669"/>
    <property type="project" value="UniProtKB-UniRule"/>
</dbReference>
<dbReference type="GO" id="GO:0016887">
    <property type="term" value="F:ATP hydrolysis activity"/>
    <property type="evidence" value="ECO:0007669"/>
    <property type="project" value="InterPro"/>
</dbReference>
<dbReference type="GO" id="GO:0140664">
    <property type="term" value="F:ATP-dependent DNA damage sensor activity"/>
    <property type="evidence" value="ECO:0007669"/>
    <property type="project" value="InterPro"/>
</dbReference>
<dbReference type="GO" id="GO:0003684">
    <property type="term" value="F:damaged DNA binding"/>
    <property type="evidence" value="ECO:0007669"/>
    <property type="project" value="UniProtKB-UniRule"/>
</dbReference>
<dbReference type="GO" id="GO:0003697">
    <property type="term" value="F:single-stranded DNA binding"/>
    <property type="evidence" value="ECO:0007669"/>
    <property type="project" value="UniProtKB-UniRule"/>
</dbReference>
<dbReference type="GO" id="GO:0006310">
    <property type="term" value="P:DNA recombination"/>
    <property type="evidence" value="ECO:0007669"/>
    <property type="project" value="UniProtKB-UniRule"/>
</dbReference>
<dbReference type="GO" id="GO:0006281">
    <property type="term" value="P:DNA repair"/>
    <property type="evidence" value="ECO:0007669"/>
    <property type="project" value="UniProtKB-UniRule"/>
</dbReference>
<dbReference type="GO" id="GO:0009432">
    <property type="term" value="P:SOS response"/>
    <property type="evidence" value="ECO:0007669"/>
    <property type="project" value="UniProtKB-UniRule"/>
</dbReference>
<dbReference type="CDD" id="cd00983">
    <property type="entry name" value="RecA"/>
    <property type="match status" value="1"/>
</dbReference>
<dbReference type="FunFam" id="3.40.50.300:FF:000087">
    <property type="entry name" value="Recombinase RecA"/>
    <property type="match status" value="1"/>
</dbReference>
<dbReference type="Gene3D" id="3.40.50.300">
    <property type="entry name" value="P-loop containing nucleotide triphosphate hydrolases"/>
    <property type="match status" value="1"/>
</dbReference>
<dbReference type="HAMAP" id="MF_00268">
    <property type="entry name" value="RecA"/>
    <property type="match status" value="1"/>
</dbReference>
<dbReference type="InterPro" id="IPR003593">
    <property type="entry name" value="AAA+_ATPase"/>
</dbReference>
<dbReference type="InterPro" id="IPR013765">
    <property type="entry name" value="DNA_recomb/repair_RecA"/>
</dbReference>
<dbReference type="InterPro" id="IPR020584">
    <property type="entry name" value="DNA_recomb/repair_RecA_CS"/>
</dbReference>
<dbReference type="InterPro" id="IPR027417">
    <property type="entry name" value="P-loop_NTPase"/>
</dbReference>
<dbReference type="InterPro" id="IPR049261">
    <property type="entry name" value="RecA-like_C"/>
</dbReference>
<dbReference type="InterPro" id="IPR049428">
    <property type="entry name" value="RecA-like_N"/>
</dbReference>
<dbReference type="InterPro" id="IPR020588">
    <property type="entry name" value="RecA_ATP-bd"/>
</dbReference>
<dbReference type="InterPro" id="IPR023400">
    <property type="entry name" value="RecA_C_sf"/>
</dbReference>
<dbReference type="InterPro" id="IPR020587">
    <property type="entry name" value="RecA_monomer-monomer_interface"/>
</dbReference>
<dbReference type="NCBIfam" id="TIGR02012">
    <property type="entry name" value="tigrfam_recA"/>
    <property type="match status" value="1"/>
</dbReference>
<dbReference type="PANTHER" id="PTHR45900:SF1">
    <property type="entry name" value="MITOCHONDRIAL DNA REPAIR PROTEIN RECA HOMOLOG-RELATED"/>
    <property type="match status" value="1"/>
</dbReference>
<dbReference type="PANTHER" id="PTHR45900">
    <property type="entry name" value="RECA"/>
    <property type="match status" value="1"/>
</dbReference>
<dbReference type="Pfam" id="PF00154">
    <property type="entry name" value="RecA"/>
    <property type="match status" value="1"/>
</dbReference>
<dbReference type="Pfam" id="PF21096">
    <property type="entry name" value="RecA_C"/>
    <property type="match status" value="1"/>
</dbReference>
<dbReference type="PRINTS" id="PR00142">
    <property type="entry name" value="RECA"/>
</dbReference>
<dbReference type="SMART" id="SM00382">
    <property type="entry name" value="AAA"/>
    <property type="match status" value="1"/>
</dbReference>
<dbReference type="SUPFAM" id="SSF52540">
    <property type="entry name" value="P-loop containing nucleoside triphosphate hydrolases"/>
    <property type="match status" value="1"/>
</dbReference>
<dbReference type="SUPFAM" id="SSF54752">
    <property type="entry name" value="RecA protein, C-terminal domain"/>
    <property type="match status" value="1"/>
</dbReference>
<dbReference type="PROSITE" id="PS00321">
    <property type="entry name" value="RECA_1"/>
    <property type="match status" value="1"/>
</dbReference>
<dbReference type="PROSITE" id="PS50162">
    <property type="entry name" value="RECA_2"/>
    <property type="match status" value="1"/>
</dbReference>
<dbReference type="PROSITE" id="PS50163">
    <property type="entry name" value="RECA_3"/>
    <property type="match status" value="1"/>
</dbReference>
<reference key="1">
    <citation type="journal article" date="2005" name="Proc. Natl. Acad. Sci. U.S.A.">
        <title>Complete genome sequence of Vibrio fischeri: a symbiotic bacterium with pathogenic congeners.</title>
        <authorList>
            <person name="Ruby E.G."/>
            <person name="Urbanowski M."/>
            <person name="Campbell J."/>
            <person name="Dunn A."/>
            <person name="Faini M."/>
            <person name="Gunsalus R."/>
            <person name="Lostroh P."/>
            <person name="Lupp C."/>
            <person name="McCann J."/>
            <person name="Millikan D."/>
            <person name="Schaefer A."/>
            <person name="Stabb E."/>
            <person name="Stevens A."/>
            <person name="Visick K."/>
            <person name="Whistler C."/>
            <person name="Greenberg E.P."/>
        </authorList>
    </citation>
    <scope>NUCLEOTIDE SEQUENCE [LARGE SCALE GENOMIC DNA]</scope>
    <source>
        <strain>ATCC 700601 / ES114</strain>
    </source>
</reference>
<organism>
    <name type="scientific">Aliivibrio fischeri (strain ATCC 700601 / ES114)</name>
    <name type="common">Vibrio fischeri</name>
    <dbReference type="NCBI Taxonomy" id="312309"/>
    <lineage>
        <taxon>Bacteria</taxon>
        <taxon>Pseudomonadati</taxon>
        <taxon>Pseudomonadota</taxon>
        <taxon>Gammaproteobacteria</taxon>
        <taxon>Vibrionales</taxon>
        <taxon>Vibrionaceae</taxon>
        <taxon>Aliivibrio</taxon>
    </lineage>
</organism>
<evidence type="ECO:0000255" key="1">
    <source>
        <dbReference type="HAMAP-Rule" id="MF_00268"/>
    </source>
</evidence>
<evidence type="ECO:0000256" key="2">
    <source>
        <dbReference type="SAM" id="MobiDB-lite"/>
    </source>
</evidence>
<accession>Q5E7G6</accession>
<name>RECA_ALIF1</name>
<feature type="chain" id="PRO_0000122892" description="Protein RecA">
    <location>
        <begin position="1"/>
        <end position="348"/>
    </location>
</feature>
<feature type="region of interest" description="Disordered" evidence="2">
    <location>
        <begin position="326"/>
        <end position="348"/>
    </location>
</feature>
<feature type="compositionally biased region" description="Basic and acidic residues" evidence="2">
    <location>
        <begin position="326"/>
        <end position="336"/>
    </location>
</feature>
<feature type="compositionally biased region" description="Acidic residues" evidence="2">
    <location>
        <begin position="338"/>
        <end position="348"/>
    </location>
</feature>
<feature type="binding site" evidence="1">
    <location>
        <begin position="65"/>
        <end position="72"/>
    </location>
    <ligand>
        <name>ATP</name>
        <dbReference type="ChEBI" id="CHEBI:30616"/>
    </ligand>
</feature>